<keyword id="KW-0067">ATP-binding</keyword>
<keyword id="KW-0436">Ligase</keyword>
<keyword id="KW-0460">Magnesium</keyword>
<keyword id="KW-0479">Metal-binding</keyword>
<keyword id="KW-0547">Nucleotide-binding</keyword>
<keyword id="KW-0658">Purine biosynthesis</keyword>
<keyword id="KW-1185">Reference proteome</keyword>
<comment type="function">
    <text evidence="1">Involved in the de novo purine biosynthesis. Catalyzes the transfer of formate to 5-phospho-ribosyl-glycinamide (GAR), producing 5-phospho-ribosyl-N-formylglycinamide (FGAR). Formate is provided by PurU via hydrolysis of 10-formyl-tetrahydrofolate.</text>
</comment>
<comment type="catalytic activity">
    <reaction evidence="1">
        <text>N(1)-(5-phospho-beta-D-ribosyl)glycinamide + formate + ATP = N(2)-formyl-N(1)-(5-phospho-beta-D-ribosyl)glycinamide + ADP + phosphate + H(+)</text>
        <dbReference type="Rhea" id="RHEA:24829"/>
        <dbReference type="ChEBI" id="CHEBI:15378"/>
        <dbReference type="ChEBI" id="CHEBI:15740"/>
        <dbReference type="ChEBI" id="CHEBI:30616"/>
        <dbReference type="ChEBI" id="CHEBI:43474"/>
        <dbReference type="ChEBI" id="CHEBI:143788"/>
        <dbReference type="ChEBI" id="CHEBI:147286"/>
        <dbReference type="ChEBI" id="CHEBI:456216"/>
        <dbReference type="EC" id="6.3.1.21"/>
    </reaction>
    <physiologicalReaction direction="left-to-right" evidence="1">
        <dbReference type="Rhea" id="RHEA:24830"/>
    </physiologicalReaction>
</comment>
<comment type="pathway">
    <text evidence="1">Purine metabolism; IMP biosynthesis via de novo pathway; N(2)-formyl-N(1)-(5-phospho-D-ribosyl)glycinamide from N(1)-(5-phospho-D-ribosyl)glycinamide (formate route): step 1/1.</text>
</comment>
<comment type="subunit">
    <text evidence="1">Homodimer.</text>
</comment>
<comment type="similarity">
    <text evidence="1">Belongs to the PurK/PurT family.</text>
</comment>
<reference key="1">
    <citation type="submission" date="2006-05" db="EMBL/GenBank/DDBJ databases">
        <authorList>
            <consortium name="Genoscope"/>
        </authorList>
    </citation>
    <scope>NUCLEOTIDE SEQUENCE [LARGE SCALE GENOMIC DNA]</scope>
    <source>
        <strain>WH7803</strain>
    </source>
</reference>
<gene>
    <name evidence="1" type="primary">purT</name>
    <name type="ordered locus">SynWH7803_2526</name>
</gene>
<sequence>MTTLPAKVLLLGSGELGKEVAIAAQRLGCHVIACDRYADAPAMQVADEAEVLAMTDREALLEVVRRHKPTVVIPEIEALAVNALAELEDEGLTVIPTARATAVTMNRDRIRDLAAGELALRTARFAYAASAEELHAEAPALGWPVVVKPVMSSSGKGQSVVDGPEGLNEAWEAAMANARGTSTHVIVEEFLRFDLEITLLTIRQRDGSTLFCPPIGHEQARGDYQCSWQPAALSDKQLSEAQAMARTVTDNLGGAGLFGVEFFLCGDEVIFSELSPRPHDTGLVTLISQNLNEFELHLRAVLGLPIPAIRCADAAASRVILADKHGSRVTYSGMEEALQESETSVFLFGKRDARPGRRMGVALARGEHQAEARAKADRSAAAVHLHIED</sequence>
<evidence type="ECO:0000255" key="1">
    <source>
        <dbReference type="HAMAP-Rule" id="MF_01643"/>
    </source>
</evidence>
<protein>
    <recommendedName>
        <fullName evidence="1">Formate-dependent phosphoribosylglycinamide formyltransferase</fullName>
        <ecNumber evidence="1">6.3.1.21</ecNumber>
    </recommendedName>
    <alternativeName>
        <fullName evidence="1">5'-phosphoribosylglycinamide transformylase 2</fullName>
    </alternativeName>
    <alternativeName>
        <fullName evidence="1">Formate-dependent GAR transformylase</fullName>
    </alternativeName>
    <alternativeName>
        <fullName evidence="1">GAR transformylase 2</fullName>
        <shortName evidence="1">GART 2</shortName>
    </alternativeName>
    <alternativeName>
        <fullName evidence="1">Non-folate glycinamide ribonucleotide transformylase</fullName>
    </alternativeName>
    <alternativeName>
        <fullName evidence="1">Phosphoribosylglycinamide formyltransferase 2</fullName>
    </alternativeName>
</protein>
<accession>A5GPT7</accession>
<organism>
    <name type="scientific">Synechococcus sp. (strain WH7803)</name>
    <dbReference type="NCBI Taxonomy" id="32051"/>
    <lineage>
        <taxon>Bacteria</taxon>
        <taxon>Bacillati</taxon>
        <taxon>Cyanobacteriota</taxon>
        <taxon>Cyanophyceae</taxon>
        <taxon>Synechococcales</taxon>
        <taxon>Synechococcaceae</taxon>
        <taxon>Synechococcus</taxon>
    </lineage>
</organism>
<dbReference type="EC" id="6.3.1.21" evidence="1"/>
<dbReference type="EMBL" id="CT971583">
    <property type="protein sequence ID" value="CAK24952.1"/>
    <property type="molecule type" value="Genomic_DNA"/>
</dbReference>
<dbReference type="SMR" id="A5GPT7"/>
<dbReference type="STRING" id="32051.SynWH7803_2526"/>
<dbReference type="KEGG" id="syx:SynWH7803_2526"/>
<dbReference type="eggNOG" id="COG0027">
    <property type="taxonomic scope" value="Bacteria"/>
</dbReference>
<dbReference type="HOGENOM" id="CLU_011534_1_3_3"/>
<dbReference type="OrthoDB" id="9804625at2"/>
<dbReference type="UniPathway" id="UPA00074">
    <property type="reaction ID" value="UER00127"/>
</dbReference>
<dbReference type="Proteomes" id="UP000001566">
    <property type="component" value="Chromosome"/>
</dbReference>
<dbReference type="GO" id="GO:0005829">
    <property type="term" value="C:cytosol"/>
    <property type="evidence" value="ECO:0007669"/>
    <property type="project" value="TreeGrafter"/>
</dbReference>
<dbReference type="GO" id="GO:0005524">
    <property type="term" value="F:ATP binding"/>
    <property type="evidence" value="ECO:0007669"/>
    <property type="project" value="UniProtKB-UniRule"/>
</dbReference>
<dbReference type="GO" id="GO:0000287">
    <property type="term" value="F:magnesium ion binding"/>
    <property type="evidence" value="ECO:0007669"/>
    <property type="project" value="InterPro"/>
</dbReference>
<dbReference type="GO" id="GO:0043815">
    <property type="term" value="F:phosphoribosylglycinamide formyltransferase 2 activity"/>
    <property type="evidence" value="ECO:0007669"/>
    <property type="project" value="UniProtKB-UniRule"/>
</dbReference>
<dbReference type="GO" id="GO:0004644">
    <property type="term" value="F:phosphoribosylglycinamide formyltransferase activity"/>
    <property type="evidence" value="ECO:0007669"/>
    <property type="project" value="InterPro"/>
</dbReference>
<dbReference type="GO" id="GO:0006189">
    <property type="term" value="P:'de novo' IMP biosynthetic process"/>
    <property type="evidence" value="ECO:0007669"/>
    <property type="project" value="UniProtKB-UniRule"/>
</dbReference>
<dbReference type="Gene3D" id="3.40.50.20">
    <property type="match status" value="1"/>
</dbReference>
<dbReference type="Gene3D" id="3.30.1490.20">
    <property type="entry name" value="ATP-grasp fold, A domain"/>
    <property type="match status" value="1"/>
</dbReference>
<dbReference type="Gene3D" id="3.30.470.20">
    <property type="entry name" value="ATP-grasp fold, B domain"/>
    <property type="match status" value="1"/>
</dbReference>
<dbReference type="HAMAP" id="MF_01643">
    <property type="entry name" value="PurT"/>
    <property type="match status" value="1"/>
</dbReference>
<dbReference type="InterPro" id="IPR011761">
    <property type="entry name" value="ATP-grasp"/>
</dbReference>
<dbReference type="InterPro" id="IPR003135">
    <property type="entry name" value="ATP-grasp_carboxylate-amine"/>
</dbReference>
<dbReference type="InterPro" id="IPR013815">
    <property type="entry name" value="ATP_grasp_subdomain_1"/>
</dbReference>
<dbReference type="InterPro" id="IPR016185">
    <property type="entry name" value="PreATP-grasp_dom_sf"/>
</dbReference>
<dbReference type="InterPro" id="IPR005862">
    <property type="entry name" value="PurT"/>
</dbReference>
<dbReference type="InterPro" id="IPR054350">
    <property type="entry name" value="PurT/PurK_preATP-grasp"/>
</dbReference>
<dbReference type="InterPro" id="IPR048740">
    <property type="entry name" value="PurT_C"/>
</dbReference>
<dbReference type="InterPro" id="IPR011054">
    <property type="entry name" value="Rudment_hybrid_motif"/>
</dbReference>
<dbReference type="NCBIfam" id="NF006766">
    <property type="entry name" value="PRK09288.1"/>
    <property type="match status" value="1"/>
</dbReference>
<dbReference type="NCBIfam" id="TIGR01142">
    <property type="entry name" value="purT"/>
    <property type="match status" value="1"/>
</dbReference>
<dbReference type="PANTHER" id="PTHR43055">
    <property type="entry name" value="FORMATE-DEPENDENT PHOSPHORIBOSYLGLYCINAMIDE FORMYLTRANSFERASE"/>
    <property type="match status" value="1"/>
</dbReference>
<dbReference type="PANTHER" id="PTHR43055:SF1">
    <property type="entry name" value="FORMATE-DEPENDENT PHOSPHORIBOSYLGLYCINAMIDE FORMYLTRANSFERASE"/>
    <property type="match status" value="1"/>
</dbReference>
<dbReference type="Pfam" id="PF02222">
    <property type="entry name" value="ATP-grasp"/>
    <property type="match status" value="1"/>
</dbReference>
<dbReference type="Pfam" id="PF21244">
    <property type="entry name" value="PurT_C"/>
    <property type="match status" value="1"/>
</dbReference>
<dbReference type="Pfam" id="PF22660">
    <property type="entry name" value="RS_preATP-grasp-like"/>
    <property type="match status" value="1"/>
</dbReference>
<dbReference type="SUPFAM" id="SSF56059">
    <property type="entry name" value="Glutathione synthetase ATP-binding domain-like"/>
    <property type="match status" value="1"/>
</dbReference>
<dbReference type="SUPFAM" id="SSF52440">
    <property type="entry name" value="PreATP-grasp domain"/>
    <property type="match status" value="1"/>
</dbReference>
<dbReference type="SUPFAM" id="SSF51246">
    <property type="entry name" value="Rudiment single hybrid motif"/>
    <property type="match status" value="1"/>
</dbReference>
<dbReference type="PROSITE" id="PS50975">
    <property type="entry name" value="ATP_GRASP"/>
    <property type="match status" value="1"/>
</dbReference>
<proteinExistence type="inferred from homology"/>
<feature type="chain" id="PRO_0000319251" description="Formate-dependent phosphoribosylglycinamide formyltransferase">
    <location>
        <begin position="1"/>
        <end position="389"/>
    </location>
</feature>
<feature type="domain" description="ATP-grasp" evidence="1">
    <location>
        <begin position="112"/>
        <end position="302"/>
    </location>
</feature>
<feature type="binding site" evidence="1">
    <location>
        <begin position="15"/>
        <end position="16"/>
    </location>
    <ligand>
        <name>N(1)-(5-phospho-beta-D-ribosyl)glycinamide</name>
        <dbReference type="ChEBI" id="CHEBI:143788"/>
    </ligand>
</feature>
<feature type="binding site" evidence="1">
    <location>
        <position position="75"/>
    </location>
    <ligand>
        <name>N(1)-(5-phospho-beta-D-ribosyl)glycinamide</name>
        <dbReference type="ChEBI" id="CHEBI:143788"/>
    </ligand>
</feature>
<feature type="binding site" evidence="1">
    <location>
        <position position="107"/>
    </location>
    <ligand>
        <name>ATP</name>
        <dbReference type="ChEBI" id="CHEBI:30616"/>
    </ligand>
</feature>
<feature type="binding site" evidence="1">
    <location>
        <position position="148"/>
    </location>
    <ligand>
        <name>ATP</name>
        <dbReference type="ChEBI" id="CHEBI:30616"/>
    </ligand>
</feature>
<feature type="binding site" evidence="1">
    <location>
        <begin position="153"/>
        <end position="158"/>
    </location>
    <ligand>
        <name>ATP</name>
        <dbReference type="ChEBI" id="CHEBI:30616"/>
    </ligand>
</feature>
<feature type="binding site" evidence="1">
    <location>
        <begin position="188"/>
        <end position="191"/>
    </location>
    <ligand>
        <name>ATP</name>
        <dbReference type="ChEBI" id="CHEBI:30616"/>
    </ligand>
</feature>
<feature type="binding site" evidence="1">
    <location>
        <position position="196"/>
    </location>
    <ligand>
        <name>ATP</name>
        <dbReference type="ChEBI" id="CHEBI:30616"/>
    </ligand>
</feature>
<feature type="binding site" evidence="1">
    <location>
        <position position="261"/>
    </location>
    <ligand>
        <name>Mg(2+)</name>
        <dbReference type="ChEBI" id="CHEBI:18420"/>
    </ligand>
</feature>
<feature type="binding site" evidence="1">
    <location>
        <position position="273"/>
    </location>
    <ligand>
        <name>Mg(2+)</name>
        <dbReference type="ChEBI" id="CHEBI:18420"/>
    </ligand>
</feature>
<feature type="binding site" evidence="1">
    <location>
        <position position="280"/>
    </location>
    <ligand>
        <name>N(1)-(5-phospho-beta-D-ribosyl)glycinamide</name>
        <dbReference type="ChEBI" id="CHEBI:143788"/>
    </ligand>
</feature>
<feature type="binding site" evidence="1">
    <location>
        <position position="350"/>
    </location>
    <ligand>
        <name>N(1)-(5-phospho-beta-D-ribosyl)glycinamide</name>
        <dbReference type="ChEBI" id="CHEBI:143788"/>
    </ligand>
</feature>
<feature type="binding site" evidence="1">
    <location>
        <begin position="357"/>
        <end position="358"/>
    </location>
    <ligand>
        <name>N(1)-(5-phospho-beta-D-ribosyl)glycinamide</name>
        <dbReference type="ChEBI" id="CHEBI:143788"/>
    </ligand>
</feature>
<name>PURT_SYNPW</name>